<dbReference type="EMBL" id="AE016853">
    <property type="protein sequence ID" value="AAO57938.1"/>
    <property type="molecule type" value="Genomic_DNA"/>
</dbReference>
<dbReference type="RefSeq" id="NP_794243.1">
    <property type="nucleotide sequence ID" value="NC_004578.1"/>
</dbReference>
<dbReference type="RefSeq" id="WP_003377503.1">
    <property type="nucleotide sequence ID" value="NC_004578.1"/>
</dbReference>
<dbReference type="SMR" id="Q87WQ5"/>
<dbReference type="STRING" id="223283.PSPTO_4490"/>
<dbReference type="GeneID" id="1186171"/>
<dbReference type="KEGG" id="pst:PSPTO_4490"/>
<dbReference type="PATRIC" id="fig|223283.9.peg.4606"/>
<dbReference type="eggNOG" id="COG0532">
    <property type="taxonomic scope" value="Bacteria"/>
</dbReference>
<dbReference type="HOGENOM" id="CLU_006301_6_1_6"/>
<dbReference type="OrthoDB" id="9811804at2"/>
<dbReference type="PhylomeDB" id="Q87WQ5"/>
<dbReference type="Proteomes" id="UP000002515">
    <property type="component" value="Chromosome"/>
</dbReference>
<dbReference type="GO" id="GO:0005829">
    <property type="term" value="C:cytosol"/>
    <property type="evidence" value="ECO:0007669"/>
    <property type="project" value="TreeGrafter"/>
</dbReference>
<dbReference type="GO" id="GO:0005525">
    <property type="term" value="F:GTP binding"/>
    <property type="evidence" value="ECO:0007669"/>
    <property type="project" value="UniProtKB-KW"/>
</dbReference>
<dbReference type="GO" id="GO:0003924">
    <property type="term" value="F:GTPase activity"/>
    <property type="evidence" value="ECO:0007669"/>
    <property type="project" value="UniProtKB-UniRule"/>
</dbReference>
<dbReference type="GO" id="GO:0003743">
    <property type="term" value="F:translation initiation factor activity"/>
    <property type="evidence" value="ECO:0007669"/>
    <property type="project" value="UniProtKB-UniRule"/>
</dbReference>
<dbReference type="CDD" id="cd01887">
    <property type="entry name" value="IF2_eIF5B"/>
    <property type="match status" value="1"/>
</dbReference>
<dbReference type="CDD" id="cd03702">
    <property type="entry name" value="IF2_mtIF2_II"/>
    <property type="match status" value="1"/>
</dbReference>
<dbReference type="CDD" id="cd03692">
    <property type="entry name" value="mtIF2_IVc"/>
    <property type="match status" value="1"/>
</dbReference>
<dbReference type="FunFam" id="2.40.30.10:FF:000007">
    <property type="entry name" value="Translation initiation factor IF-2"/>
    <property type="match status" value="1"/>
</dbReference>
<dbReference type="FunFam" id="2.40.30.10:FF:000008">
    <property type="entry name" value="Translation initiation factor IF-2"/>
    <property type="match status" value="1"/>
</dbReference>
<dbReference type="FunFam" id="3.40.50.10050:FF:000001">
    <property type="entry name" value="Translation initiation factor IF-2"/>
    <property type="match status" value="1"/>
</dbReference>
<dbReference type="FunFam" id="3.40.50.300:FF:000019">
    <property type="entry name" value="Translation initiation factor IF-2"/>
    <property type="match status" value="1"/>
</dbReference>
<dbReference type="Gene3D" id="3.40.50.300">
    <property type="entry name" value="P-loop containing nucleotide triphosphate hydrolases"/>
    <property type="match status" value="1"/>
</dbReference>
<dbReference type="Gene3D" id="3.30.56.50">
    <property type="entry name" value="Putative DNA-binding domain, N-terminal subdomain of bacterial translation initiation factor IF2"/>
    <property type="match status" value="1"/>
</dbReference>
<dbReference type="Gene3D" id="2.40.30.10">
    <property type="entry name" value="Translation factors"/>
    <property type="match status" value="2"/>
</dbReference>
<dbReference type="Gene3D" id="3.40.50.10050">
    <property type="entry name" value="Translation initiation factor IF- 2, domain 3"/>
    <property type="match status" value="1"/>
</dbReference>
<dbReference type="HAMAP" id="MF_00100_B">
    <property type="entry name" value="IF_2_B"/>
    <property type="match status" value="1"/>
</dbReference>
<dbReference type="InterPro" id="IPR009061">
    <property type="entry name" value="DNA-bd_dom_put_sf"/>
</dbReference>
<dbReference type="InterPro" id="IPR053905">
    <property type="entry name" value="EF-G-like_DII"/>
</dbReference>
<dbReference type="InterPro" id="IPR013575">
    <property type="entry name" value="IF2_assoc_dom_bac"/>
</dbReference>
<dbReference type="InterPro" id="IPR044145">
    <property type="entry name" value="IF2_II"/>
</dbReference>
<dbReference type="InterPro" id="IPR006847">
    <property type="entry name" value="IF2_N"/>
</dbReference>
<dbReference type="InterPro" id="IPR027417">
    <property type="entry name" value="P-loop_NTPase"/>
</dbReference>
<dbReference type="InterPro" id="IPR005225">
    <property type="entry name" value="Small_GTP-bd"/>
</dbReference>
<dbReference type="InterPro" id="IPR000795">
    <property type="entry name" value="T_Tr_GTP-bd_dom"/>
</dbReference>
<dbReference type="InterPro" id="IPR000178">
    <property type="entry name" value="TF_IF2_bacterial-like"/>
</dbReference>
<dbReference type="InterPro" id="IPR015760">
    <property type="entry name" value="TIF_IF2"/>
</dbReference>
<dbReference type="InterPro" id="IPR023115">
    <property type="entry name" value="TIF_IF2_dom3"/>
</dbReference>
<dbReference type="InterPro" id="IPR036925">
    <property type="entry name" value="TIF_IF2_dom3_sf"/>
</dbReference>
<dbReference type="InterPro" id="IPR009000">
    <property type="entry name" value="Transl_B-barrel_sf"/>
</dbReference>
<dbReference type="NCBIfam" id="TIGR00487">
    <property type="entry name" value="IF-2"/>
    <property type="match status" value="1"/>
</dbReference>
<dbReference type="NCBIfam" id="TIGR00231">
    <property type="entry name" value="small_GTP"/>
    <property type="match status" value="1"/>
</dbReference>
<dbReference type="PANTHER" id="PTHR43381:SF5">
    <property type="entry name" value="TR-TYPE G DOMAIN-CONTAINING PROTEIN"/>
    <property type="match status" value="1"/>
</dbReference>
<dbReference type="PANTHER" id="PTHR43381">
    <property type="entry name" value="TRANSLATION INITIATION FACTOR IF-2-RELATED"/>
    <property type="match status" value="1"/>
</dbReference>
<dbReference type="Pfam" id="PF22042">
    <property type="entry name" value="EF-G_D2"/>
    <property type="match status" value="1"/>
</dbReference>
<dbReference type="Pfam" id="PF00009">
    <property type="entry name" value="GTP_EFTU"/>
    <property type="match status" value="1"/>
</dbReference>
<dbReference type="Pfam" id="PF11987">
    <property type="entry name" value="IF-2"/>
    <property type="match status" value="1"/>
</dbReference>
<dbReference type="Pfam" id="PF08364">
    <property type="entry name" value="IF2_assoc"/>
    <property type="match status" value="1"/>
</dbReference>
<dbReference type="Pfam" id="PF04760">
    <property type="entry name" value="IF2_N"/>
    <property type="match status" value="2"/>
</dbReference>
<dbReference type="SUPFAM" id="SSF52156">
    <property type="entry name" value="Initiation factor IF2/eIF5b, domain 3"/>
    <property type="match status" value="1"/>
</dbReference>
<dbReference type="SUPFAM" id="SSF52540">
    <property type="entry name" value="P-loop containing nucleoside triphosphate hydrolases"/>
    <property type="match status" value="1"/>
</dbReference>
<dbReference type="SUPFAM" id="SSF46955">
    <property type="entry name" value="Putative DNA-binding domain"/>
    <property type="match status" value="1"/>
</dbReference>
<dbReference type="SUPFAM" id="SSF50447">
    <property type="entry name" value="Translation proteins"/>
    <property type="match status" value="2"/>
</dbReference>
<dbReference type="PROSITE" id="PS51722">
    <property type="entry name" value="G_TR_2"/>
    <property type="match status" value="1"/>
</dbReference>
<dbReference type="PROSITE" id="PS01176">
    <property type="entry name" value="IF2"/>
    <property type="match status" value="1"/>
</dbReference>
<protein>
    <recommendedName>
        <fullName evidence="2">Translation initiation factor IF-2</fullName>
    </recommendedName>
</protein>
<comment type="function">
    <text evidence="2">One of the essential components for the initiation of protein synthesis. Protects formylmethionyl-tRNA from spontaneous hydrolysis and promotes its binding to the 30S ribosomal subunits. Also involved in the hydrolysis of GTP during the formation of the 70S ribosomal complex.</text>
</comment>
<comment type="subcellular location">
    <subcellularLocation>
        <location evidence="2">Cytoplasm</location>
    </subcellularLocation>
</comment>
<comment type="similarity">
    <text evidence="2">Belongs to the TRAFAC class translation factor GTPase superfamily. Classic translation factor GTPase family. IF-2 subfamily.</text>
</comment>
<reference key="1">
    <citation type="journal article" date="2003" name="Proc. Natl. Acad. Sci. U.S.A.">
        <title>The complete genome sequence of the Arabidopsis and tomato pathogen Pseudomonas syringae pv. tomato DC3000.</title>
        <authorList>
            <person name="Buell C.R."/>
            <person name="Joardar V."/>
            <person name="Lindeberg M."/>
            <person name="Selengut J."/>
            <person name="Paulsen I.T."/>
            <person name="Gwinn M.L."/>
            <person name="Dodson R.J."/>
            <person name="DeBoy R.T."/>
            <person name="Durkin A.S."/>
            <person name="Kolonay J.F."/>
            <person name="Madupu R."/>
            <person name="Daugherty S.C."/>
            <person name="Brinkac L.M."/>
            <person name="Beanan M.J."/>
            <person name="Haft D.H."/>
            <person name="Nelson W.C."/>
            <person name="Davidsen T.M."/>
            <person name="Zafar N."/>
            <person name="Zhou L."/>
            <person name="Liu J."/>
            <person name="Yuan Q."/>
            <person name="Khouri H.M."/>
            <person name="Fedorova N.B."/>
            <person name="Tran B."/>
            <person name="Russell D."/>
            <person name="Berry K.J."/>
            <person name="Utterback T.R."/>
            <person name="Van Aken S.E."/>
            <person name="Feldblyum T.V."/>
            <person name="D'Ascenzo M."/>
            <person name="Deng W.-L."/>
            <person name="Ramos A.R."/>
            <person name="Alfano J.R."/>
            <person name="Cartinhour S."/>
            <person name="Chatterjee A.K."/>
            <person name="Delaney T.P."/>
            <person name="Lazarowitz S.G."/>
            <person name="Martin G.B."/>
            <person name="Schneider D.J."/>
            <person name="Tang X."/>
            <person name="Bender C.L."/>
            <person name="White O."/>
            <person name="Fraser C.M."/>
            <person name="Collmer A."/>
        </authorList>
    </citation>
    <scope>NUCLEOTIDE SEQUENCE [LARGE SCALE GENOMIC DNA]</scope>
    <source>
        <strain>ATCC BAA-871 / DC3000</strain>
    </source>
</reference>
<name>IF2_PSESM</name>
<keyword id="KW-0963">Cytoplasm</keyword>
<keyword id="KW-0342">GTP-binding</keyword>
<keyword id="KW-0396">Initiation factor</keyword>
<keyword id="KW-0547">Nucleotide-binding</keyword>
<keyword id="KW-0648">Protein biosynthesis</keyword>
<keyword id="KW-1185">Reference proteome</keyword>
<organism>
    <name type="scientific">Pseudomonas syringae pv. tomato (strain ATCC BAA-871 / DC3000)</name>
    <dbReference type="NCBI Taxonomy" id="223283"/>
    <lineage>
        <taxon>Bacteria</taxon>
        <taxon>Pseudomonadati</taxon>
        <taxon>Pseudomonadota</taxon>
        <taxon>Gammaproteobacteria</taxon>
        <taxon>Pseudomonadales</taxon>
        <taxon>Pseudomonadaceae</taxon>
        <taxon>Pseudomonas</taxon>
    </lineage>
</organism>
<proteinExistence type="inferred from homology"/>
<gene>
    <name evidence="2" type="primary">infB</name>
    <name type="ordered locus">PSPTO_4490</name>
</gene>
<feature type="chain" id="PRO_0000137238" description="Translation initiation factor IF-2">
    <location>
        <begin position="1"/>
        <end position="841"/>
    </location>
</feature>
<feature type="domain" description="tr-type G">
    <location>
        <begin position="341"/>
        <end position="510"/>
    </location>
</feature>
<feature type="region of interest" description="Disordered" evidence="3">
    <location>
        <begin position="94"/>
        <end position="255"/>
    </location>
</feature>
<feature type="region of interest" description="G1" evidence="1">
    <location>
        <begin position="350"/>
        <end position="357"/>
    </location>
</feature>
<feature type="region of interest" description="G2" evidence="1">
    <location>
        <begin position="375"/>
        <end position="379"/>
    </location>
</feature>
<feature type="region of interest" description="G3" evidence="1">
    <location>
        <begin position="396"/>
        <end position="399"/>
    </location>
</feature>
<feature type="region of interest" description="G4" evidence="1">
    <location>
        <begin position="450"/>
        <end position="453"/>
    </location>
</feature>
<feature type="region of interest" description="G5" evidence="1">
    <location>
        <begin position="486"/>
        <end position="488"/>
    </location>
</feature>
<feature type="compositionally biased region" description="Basic and acidic residues" evidence="3">
    <location>
        <begin position="96"/>
        <end position="135"/>
    </location>
</feature>
<feature type="compositionally biased region" description="Low complexity" evidence="3">
    <location>
        <begin position="136"/>
        <end position="175"/>
    </location>
</feature>
<feature type="compositionally biased region" description="Basic and acidic residues" evidence="3">
    <location>
        <begin position="176"/>
        <end position="217"/>
    </location>
</feature>
<feature type="compositionally biased region" description="Basic and acidic residues" evidence="3">
    <location>
        <begin position="225"/>
        <end position="234"/>
    </location>
</feature>
<feature type="compositionally biased region" description="Basic residues" evidence="3">
    <location>
        <begin position="235"/>
        <end position="248"/>
    </location>
</feature>
<feature type="binding site" evidence="2">
    <location>
        <begin position="350"/>
        <end position="357"/>
    </location>
    <ligand>
        <name>GTP</name>
        <dbReference type="ChEBI" id="CHEBI:37565"/>
    </ligand>
</feature>
<feature type="binding site" evidence="2">
    <location>
        <begin position="396"/>
        <end position="400"/>
    </location>
    <ligand>
        <name>GTP</name>
        <dbReference type="ChEBI" id="CHEBI:37565"/>
    </ligand>
</feature>
<feature type="binding site" evidence="2">
    <location>
        <begin position="450"/>
        <end position="453"/>
    </location>
    <ligand>
        <name>GTP</name>
        <dbReference type="ChEBI" id="CHEBI:37565"/>
    </ligand>
</feature>
<sequence>MTQVTVKELAKVVDTPVERLLQQMREAGLPHTAAEQVVTDNEKQALLTHLKSGHKAKVEEPRKITLQRKTTSTLRVAGSKSISVEVRKKKVFVQRSPEEIEAERKREMDERRAVENAARQKAEEEAKRRAEEDARNQPAAGQPASAPAQPVAAAEPVREAPAAAAPAPASAAPSADARKRDEQRRPDKPRADDRNARGGDGDRKNAPHRASVKEKAPAPRVAPRTTDEESDSFRRGGRGKGKLKKRNAHGFQSPTGPVIRDVAIGETITVGELSAQMSVKAAEVIKFMFKMGTPVTINQVLDQETAQLIAEELGHKVTLVSDNALEDSLAESLKFEGESFSRAPVVTVMGHVDHGKTSLLDYIRRAKVAAGEAGGITQHIGAYHVETERGMVTFLDTPGHAAFTAMRARGAKATDIVILVVAADDGVMPQTIEAVQHAVAAGVPLVVAVNKIDKPGADLDRIRSELSVHGVTSEEWGGDTPFVSVSAKMGTGVDELLEAVLLQAEVLELKATPSAPGRGVVVESRLDKGRGPVATVLVQDGTLRQGDMVLVGSNFGRIRAMLDENGKPVKEAGPSIPVEILGLDGTPDAGDEMSVLSDEKKAREVALFRQGKFREVKLARAHAGKLENIFENMGQAEKKTLNIVLKSDVRGSLEALNGALNGLGNDEVQVRVVGGGVGGITESDANLALASNAVLFGFNVRADAGARKIVEQEGLDMRYYNVIYDIIEDVKKALTGMLGSDVRENILGIAEVRDVFRSPKFGAIAGCMVLEGTVYRNRPIRVLREDIVIFEGELESLRRFKDDAADVRAGMECGIGVKSYNDVKVGDKIEVFEKVQVARSL</sequence>
<evidence type="ECO:0000250" key="1"/>
<evidence type="ECO:0000255" key="2">
    <source>
        <dbReference type="HAMAP-Rule" id="MF_00100"/>
    </source>
</evidence>
<evidence type="ECO:0000256" key="3">
    <source>
        <dbReference type="SAM" id="MobiDB-lite"/>
    </source>
</evidence>
<accession>Q87WQ5</accession>